<evidence type="ECO:0000255" key="1">
    <source>
        <dbReference type="HAMAP-Rule" id="MF_00142"/>
    </source>
</evidence>
<comment type="function">
    <text evidence="1">Involved in iron-sulfur (Fe-S) cluster assembly. May act as a regulator of Fe-S biogenesis.</text>
</comment>
<comment type="similarity">
    <text evidence="1">Belongs to the frataxin family.</text>
</comment>
<feature type="chain" id="PRO_1000071462" description="Iron-sulfur cluster assembly protein CyaY">
    <location>
        <begin position="1"/>
        <end position="102"/>
    </location>
</feature>
<organism>
    <name type="scientific">Actinobacillus succinogenes (strain ATCC 55618 / DSM 22257 / CCUG 43843 / 130Z)</name>
    <dbReference type="NCBI Taxonomy" id="339671"/>
    <lineage>
        <taxon>Bacteria</taxon>
        <taxon>Pseudomonadati</taxon>
        <taxon>Pseudomonadota</taxon>
        <taxon>Gammaproteobacteria</taxon>
        <taxon>Pasteurellales</taxon>
        <taxon>Pasteurellaceae</taxon>
        <taxon>Actinobacillus</taxon>
    </lineage>
</organism>
<keyword id="KW-0408">Iron</keyword>
<keyword id="KW-0479">Metal-binding</keyword>
<keyword id="KW-1185">Reference proteome</keyword>
<proteinExistence type="inferred from homology"/>
<gene>
    <name evidence="1" type="primary">cyaY</name>
    <name type="ordered locus">Asuc_0346</name>
</gene>
<reference key="1">
    <citation type="journal article" date="2010" name="BMC Genomics">
        <title>A genomic perspective on the potential of Actinobacillus succinogenes for industrial succinate production.</title>
        <authorList>
            <person name="McKinlay J.B."/>
            <person name="Laivenieks M."/>
            <person name="Schindler B.D."/>
            <person name="McKinlay A.A."/>
            <person name="Siddaramappa S."/>
            <person name="Challacombe J.F."/>
            <person name="Lowry S.R."/>
            <person name="Clum A."/>
            <person name="Lapidus A.L."/>
            <person name="Burkhart K.B."/>
            <person name="Harkins V."/>
            <person name="Vieille C."/>
        </authorList>
    </citation>
    <scope>NUCLEOTIDE SEQUENCE [LARGE SCALE GENOMIC DNA]</scope>
    <source>
        <strain>ATCC 55618 / DSM 22257 / CCUG 43843 / 130Z</strain>
    </source>
</reference>
<name>CYAY_ACTSZ</name>
<protein>
    <recommendedName>
        <fullName evidence="1">Iron-sulfur cluster assembly protein CyaY</fullName>
    </recommendedName>
</protein>
<sequence length="102" mass="11708">MNVAEFHQNIDQLWDSIEEQLEAQDADADCDRQGSVFTITFDDRSQIVVNKQEPLLELWLASRLGGLHFAWKNNDWVNGQGVRFWDALTEACQAHGEQVSFI</sequence>
<accession>A6VL77</accession>
<dbReference type="EMBL" id="CP000746">
    <property type="protein sequence ID" value="ABR73724.1"/>
    <property type="molecule type" value="Genomic_DNA"/>
</dbReference>
<dbReference type="RefSeq" id="WP_011978999.1">
    <property type="nucleotide sequence ID" value="NC_009655.1"/>
</dbReference>
<dbReference type="SMR" id="A6VL77"/>
<dbReference type="STRING" id="339671.Asuc_0346"/>
<dbReference type="KEGG" id="asu:Asuc_0346"/>
<dbReference type="eggNOG" id="COG1965">
    <property type="taxonomic scope" value="Bacteria"/>
</dbReference>
<dbReference type="HOGENOM" id="CLU_080880_3_0_6"/>
<dbReference type="OrthoDB" id="285675at2"/>
<dbReference type="Proteomes" id="UP000001114">
    <property type="component" value="Chromosome"/>
</dbReference>
<dbReference type="GO" id="GO:0005829">
    <property type="term" value="C:cytosol"/>
    <property type="evidence" value="ECO:0007669"/>
    <property type="project" value="TreeGrafter"/>
</dbReference>
<dbReference type="GO" id="GO:0008199">
    <property type="term" value="F:ferric iron binding"/>
    <property type="evidence" value="ECO:0007669"/>
    <property type="project" value="InterPro"/>
</dbReference>
<dbReference type="GO" id="GO:0008198">
    <property type="term" value="F:ferrous iron binding"/>
    <property type="evidence" value="ECO:0007669"/>
    <property type="project" value="TreeGrafter"/>
</dbReference>
<dbReference type="GO" id="GO:0016226">
    <property type="term" value="P:iron-sulfur cluster assembly"/>
    <property type="evidence" value="ECO:0007669"/>
    <property type="project" value="UniProtKB-UniRule"/>
</dbReference>
<dbReference type="CDD" id="cd00503">
    <property type="entry name" value="Frataxin"/>
    <property type="match status" value="1"/>
</dbReference>
<dbReference type="Gene3D" id="3.30.920.10">
    <property type="entry name" value="Frataxin/CyaY"/>
    <property type="match status" value="1"/>
</dbReference>
<dbReference type="HAMAP" id="MF_00142">
    <property type="entry name" value="CyaY"/>
    <property type="match status" value="1"/>
</dbReference>
<dbReference type="InterPro" id="IPR047584">
    <property type="entry name" value="CyaY"/>
</dbReference>
<dbReference type="InterPro" id="IPR002908">
    <property type="entry name" value="Frataxin/CyaY"/>
</dbReference>
<dbReference type="InterPro" id="IPR036524">
    <property type="entry name" value="Frataxin/CyaY_sf"/>
</dbReference>
<dbReference type="InterPro" id="IPR020895">
    <property type="entry name" value="Frataxin_CS"/>
</dbReference>
<dbReference type="NCBIfam" id="TIGR03421">
    <property type="entry name" value="FeS_CyaY"/>
    <property type="match status" value="1"/>
</dbReference>
<dbReference type="PANTHER" id="PTHR16821">
    <property type="entry name" value="FRATAXIN"/>
    <property type="match status" value="1"/>
</dbReference>
<dbReference type="PANTHER" id="PTHR16821:SF2">
    <property type="entry name" value="FRATAXIN, MITOCHONDRIAL"/>
    <property type="match status" value="1"/>
</dbReference>
<dbReference type="Pfam" id="PF01491">
    <property type="entry name" value="Frataxin_Cyay"/>
    <property type="match status" value="1"/>
</dbReference>
<dbReference type="SMART" id="SM01219">
    <property type="entry name" value="Frataxin_Cyay"/>
    <property type="match status" value="1"/>
</dbReference>
<dbReference type="SUPFAM" id="SSF55387">
    <property type="entry name" value="Frataxin/Nqo15-like"/>
    <property type="match status" value="1"/>
</dbReference>
<dbReference type="PROSITE" id="PS01344">
    <property type="entry name" value="FRATAXIN_1"/>
    <property type="match status" value="1"/>
</dbReference>
<dbReference type="PROSITE" id="PS50810">
    <property type="entry name" value="FRATAXIN_2"/>
    <property type="match status" value="1"/>
</dbReference>